<reference key="1">
    <citation type="journal article" date="2021" name="Mar. Drugs">
        <title>Diversity of Conopeptides and Conoenzymes from the Venom Duct of the Marine Cone Snail Conus bayani as Determined from Transcriptomic and Proteomic Analyses.</title>
        <authorList>
            <person name="Rajaian Pushpabai R."/>
            <person name="Wilson Alphonse C.R."/>
            <person name="Mani R."/>
            <person name="Arun Apte D."/>
            <person name="Franklin J.B."/>
        </authorList>
    </citation>
    <scope>NUCLEOTIDE SEQUENCE [MRNA]</scope>
    <scope>PROTEIN SEQUENCE OF 56-70</scope>
    <scope>MASS SPECTROMETRY</scope>
    <scope>SUBCELLULAR LOCATION</scope>
    <source>
        <tissue>Venom</tissue>
        <tissue>Venom duct</tissue>
    </source>
</reference>
<comment type="subcellular location">
    <subcellularLocation>
        <location evidence="2">Secreted</location>
    </subcellularLocation>
</comment>
<comment type="tissue specificity">
    <text evidence="5">Expressed by the venom duct.</text>
</comment>
<comment type="domain">
    <text evidence="4">The cysteine framework is III (CC-C-C-CC). Classified in the M-1 branch, since 1 residue stands between the fourth and the fifth cysteine residues.</text>
</comment>
<comment type="mass spectrometry" mass="1524.3" method="MALDI" evidence="2"/>
<comment type="similarity">
    <text evidence="4">Belongs to the conotoxin M superfamily.</text>
</comment>
<proteinExistence type="evidence at protein level"/>
<dbReference type="GO" id="GO:0005576">
    <property type="term" value="C:extracellular region"/>
    <property type="evidence" value="ECO:0007669"/>
    <property type="project" value="UniProtKB-SubCell"/>
</dbReference>
<dbReference type="GO" id="GO:0008200">
    <property type="term" value="F:ion channel inhibitor activity"/>
    <property type="evidence" value="ECO:0007669"/>
    <property type="project" value="InterPro"/>
</dbReference>
<dbReference type="GO" id="GO:0090729">
    <property type="term" value="F:toxin activity"/>
    <property type="evidence" value="ECO:0007669"/>
    <property type="project" value="UniProtKB-KW"/>
</dbReference>
<dbReference type="InterPro" id="IPR004214">
    <property type="entry name" value="Conotoxin"/>
</dbReference>
<dbReference type="Pfam" id="PF02950">
    <property type="entry name" value="Conotoxin"/>
    <property type="match status" value="1"/>
</dbReference>
<name>CM3A_CONBY</name>
<protein>
    <recommendedName>
        <fullName evidence="3">Conotoxin ba3a</fullName>
    </recommendedName>
</protein>
<accession>P0DTJ4</accession>
<keyword id="KW-0903">Direct protein sequencing</keyword>
<keyword id="KW-0964">Secreted</keyword>
<keyword id="KW-0732">Signal</keyword>
<keyword id="KW-0800">Toxin</keyword>
<organism>
    <name type="scientific">Conus bayani</name>
    <name type="common">Bayan's cone</name>
    <name type="synonym">Stellaconus bayani</name>
    <dbReference type="NCBI Taxonomy" id="2070216"/>
    <lineage>
        <taxon>Eukaryota</taxon>
        <taxon>Metazoa</taxon>
        <taxon>Spiralia</taxon>
        <taxon>Lophotrochozoa</taxon>
        <taxon>Mollusca</taxon>
        <taxon>Gastropoda</taxon>
        <taxon>Caenogastropoda</taxon>
        <taxon>Neogastropoda</taxon>
        <taxon>Conoidea</taxon>
        <taxon>Conidae</taxon>
        <taxon>Conus</taxon>
        <taxon>Splinoconus</taxon>
    </lineage>
</organism>
<sequence length="70" mass="7809">MLKIGVMLSIILVLFPLATLQLVAERPAAERYAENKQDLNPDERRNYLVDLGVERTCCTACNIPPCKCCA</sequence>
<feature type="signal peptide" evidence="1">
    <location>
        <begin position="1"/>
        <end position="20"/>
    </location>
</feature>
<feature type="propeptide" id="PRO_0000454984" evidence="5">
    <location>
        <begin position="21"/>
        <end position="55"/>
    </location>
</feature>
<feature type="peptide" id="PRO_0000454985" description="Conotoxin ba3a" evidence="2">
    <location>
        <begin position="56"/>
        <end position="70"/>
    </location>
</feature>
<evidence type="ECO:0000255" key="1"/>
<evidence type="ECO:0000269" key="2">
    <source>
    </source>
</evidence>
<evidence type="ECO:0000303" key="3">
    <source>
    </source>
</evidence>
<evidence type="ECO:0000305" key="4"/>
<evidence type="ECO:0000305" key="5">
    <source>
    </source>
</evidence>